<proteinExistence type="evidence at protein level"/>
<reference key="1">
    <citation type="journal article" date="1998" name="Science">
        <title>Genome sequence of an obligate intracellular pathogen of humans: Chlamydia trachomatis.</title>
        <authorList>
            <person name="Stephens R.S."/>
            <person name="Kalman S."/>
            <person name="Lammel C.J."/>
            <person name="Fan J."/>
            <person name="Marathe R."/>
            <person name="Aravind L."/>
            <person name="Mitchell W.P."/>
            <person name="Olinger L."/>
            <person name="Tatusov R.L."/>
            <person name="Zhao Q."/>
            <person name="Koonin E.V."/>
            <person name="Davis R.W."/>
        </authorList>
    </citation>
    <scope>NUCLEOTIDE SEQUENCE [LARGE SCALE GENOMIC DNA]</scope>
    <source>
        <strain>ATCC VR-885 / DSM 19411 / UW-3/Cx</strain>
    </source>
</reference>
<reference key="2">
    <citation type="journal article" date="2016" name="MBio">
        <title>Discovery of the elusive UDP-diacylglucosamine hydrolase in the Lipid A biosynthetic pathway in Chlamydia trachomatis.</title>
        <authorList>
            <person name="Young H.E."/>
            <person name="Zhao J."/>
            <person name="Barker J.R."/>
            <person name="Guan Z."/>
            <person name="Valdivia R.H."/>
            <person name="Zhou P."/>
        </authorList>
    </citation>
    <scope>IDENTIFICATION</scope>
    <scope>FUNCTION</scope>
    <scope>CATALYTIC ACTIVITY</scope>
    <scope>COFACTOR</scope>
    <scope>PATHWAY</scope>
    <scope>SUBCELLULAR LOCATION</scope>
    <scope>MUTAGENESIS OF ASP-59</scope>
</reference>
<feature type="chain" id="PRO_0000019224" description="UDP-2,3-diacylglucosamine pyrophosphatase LpxG">
    <location>
        <begin position="1"/>
        <end position="329"/>
    </location>
</feature>
<feature type="transmembrane region" description="Helical" evidence="2">
    <location>
        <begin position="2"/>
        <end position="24"/>
    </location>
</feature>
<feature type="binding site" evidence="1">
    <location>
        <position position="59"/>
    </location>
    <ligand>
        <name>a divalent metal cation</name>
        <dbReference type="ChEBI" id="CHEBI:60240"/>
        <label>1</label>
    </ligand>
</feature>
<feature type="binding site" evidence="1">
    <location>
        <position position="61"/>
    </location>
    <ligand>
        <name>a divalent metal cation</name>
        <dbReference type="ChEBI" id="CHEBI:60240"/>
        <label>1</label>
    </ligand>
</feature>
<feature type="binding site" evidence="1">
    <location>
        <position position="91"/>
    </location>
    <ligand>
        <name>a divalent metal cation</name>
        <dbReference type="ChEBI" id="CHEBI:60240"/>
        <label>1</label>
    </ligand>
</feature>
<feature type="binding site" evidence="1">
    <location>
        <position position="91"/>
    </location>
    <ligand>
        <name>a divalent metal cation</name>
        <dbReference type="ChEBI" id="CHEBI:60240"/>
        <label>2</label>
    </ligand>
</feature>
<feature type="binding site" evidence="1">
    <location>
        <position position="123"/>
    </location>
    <ligand>
        <name>a divalent metal cation</name>
        <dbReference type="ChEBI" id="CHEBI:60240"/>
        <label>2</label>
    </ligand>
</feature>
<feature type="binding site" evidence="1">
    <location>
        <position position="257"/>
    </location>
    <ligand>
        <name>a divalent metal cation</name>
        <dbReference type="ChEBI" id="CHEBI:60240"/>
        <label>2</label>
    </ligand>
</feature>
<feature type="binding site" evidence="1">
    <location>
        <position position="259"/>
    </location>
    <ligand>
        <name>a divalent metal cation</name>
        <dbReference type="ChEBI" id="CHEBI:60240"/>
        <label>1</label>
    </ligand>
</feature>
<feature type="mutagenesis site" description="Loss of catalytic activity. Overexpression of this mutant does not result in a significant reduction of bacterial infectivity." evidence="3">
    <original>D</original>
    <variation>A</variation>
    <location>
        <position position="59"/>
    </location>
</feature>
<sequence>MFVSVGITASLTTILAAPVLTWVWANHLEPNLLRVTRLNWNLPKKFAHLHGLRIVQISDLHLNHSTPDAFLKKVSRKISSLSPDILVFTGDFVCRAKVETPERLKHFLCSLHAPLGCFACLGNHDYATYVSRDIHGKINTISAMNSRPLKRAFTSVYQSLFASSRNEFADTLNPQIPNPHLVSILRNTPFQLLHNQSATLSDTINIVGLGDFFAKQFDPKKAFTDYNPTLPGIILSHNPDTIHHLQDYPGDVVFSGHSHGPQISLPWPKFANTITNKLSGLENPELARGLFSFPEESRLLYVNRGLGGWKRIRFCSPPEICLMRCLYEP</sequence>
<comment type="function">
    <text evidence="3">Hydrolyzes the pyrophosphate bond of UDP-2,3-diacylglucosamine to form 2,3-diacylglucosamine 1-phosphate (lipid X) and UMP by catalyzing the attack of water at the alpha-P atom. Involved in the biosynthesis of lipid A, a phosphorylated glycolipid that anchors the lipooligosaccharide (LOS) to the outer membrane of the cell. Can functionally complement lpxH deficiency in E.coli. Overexpression of LpxG results in toxic accumulation of lipid X and profoundly reduces the infectivity of C.trachomatis. Can utilize UDP-2-N,3-O-bis((3R)-3-hydroxytetradecanoyl)-alpha-D-glucosamine as substrate in vitro, but the substrate is likely UDP-2-N-((3R)-3-hydroxyicosanoyl),3-O-(tetradecanoyl)-alpha-D-glucosamine in vivo.</text>
</comment>
<comment type="catalytic activity">
    <reaction evidence="3">
        <text>UDP-2,3-diacyl-alpha-D-glucosamine + H2O = 2,3-diacyl-alpha-D-glucosaminyl 1-phosphate + UMP + 2 H(+)</text>
        <dbReference type="Rhea" id="RHEA:53328"/>
        <dbReference type="ChEBI" id="CHEBI:15377"/>
        <dbReference type="ChEBI" id="CHEBI:15378"/>
        <dbReference type="ChEBI" id="CHEBI:57865"/>
        <dbReference type="ChEBI" id="CHEBI:137179"/>
        <dbReference type="ChEBI" id="CHEBI:137180"/>
    </reaction>
</comment>
<comment type="cofactor">
    <cofactor evidence="3">
        <name>Mn(2+)</name>
        <dbReference type="ChEBI" id="CHEBI:29035"/>
    </cofactor>
    <text evidence="1">Binds 2 divalent metal cations.</text>
</comment>
<comment type="pathway">
    <text evidence="3">Glycolipid biosynthesis; lipid IV(A) biosynthesis.</text>
</comment>
<comment type="subcellular location">
    <subcellularLocation>
        <location evidence="6">Cell inner membrane</location>
        <topology evidence="2">Single-pass membrane protein</topology>
        <orientation evidence="6">Cytoplasmic side</orientation>
    </subcellularLocation>
</comment>
<comment type="similarity">
    <text evidence="5">Belongs to the metallophosphoesterase superfamily. LpxG family.</text>
</comment>
<keyword id="KW-0997">Cell inner membrane</keyword>
<keyword id="KW-1003">Cell membrane</keyword>
<keyword id="KW-0378">Hydrolase</keyword>
<keyword id="KW-0464">Manganese</keyword>
<keyword id="KW-0472">Membrane</keyword>
<keyword id="KW-0479">Metal-binding</keyword>
<keyword id="KW-1185">Reference proteome</keyword>
<keyword id="KW-0812">Transmembrane</keyword>
<keyword id="KW-1133">Transmembrane helix</keyword>
<gene>
    <name evidence="4" type="primary">lpxG</name>
    <name type="ordered locus">CT_461</name>
</gene>
<name>LPXG_CHLTR</name>
<evidence type="ECO:0000250" key="1"/>
<evidence type="ECO:0000255" key="2"/>
<evidence type="ECO:0000269" key="3">
    <source>
    </source>
</evidence>
<evidence type="ECO:0000303" key="4">
    <source>
    </source>
</evidence>
<evidence type="ECO:0000305" key="5"/>
<evidence type="ECO:0000305" key="6">
    <source>
    </source>
</evidence>
<protein>
    <recommendedName>
        <fullName evidence="4">UDP-2,3-diacylglucosamine pyrophosphatase LpxG</fullName>
        <shortName evidence="4">UDP-DAGn pyrophosphatase</shortName>
        <ecNumber evidence="3">3.6.1.-</ecNumber>
    </recommendedName>
    <alternativeName>
        <fullName evidence="4">UDP-2,3-diacylglucosamine hydrolase LpxG</fullName>
        <shortName evidence="4">UDP-DAGn hydrolase</shortName>
    </alternativeName>
</protein>
<dbReference type="EC" id="3.6.1.-" evidence="3"/>
<dbReference type="EMBL" id="AE001273">
    <property type="protein sequence ID" value="AAC68061.1"/>
    <property type="molecule type" value="Genomic_DNA"/>
</dbReference>
<dbReference type="PIR" id="A71511">
    <property type="entry name" value="A71511"/>
</dbReference>
<dbReference type="RefSeq" id="NP_219974.1">
    <property type="nucleotide sequence ID" value="NC_000117.1"/>
</dbReference>
<dbReference type="RefSeq" id="WP_009871819.1">
    <property type="nucleotide sequence ID" value="NC_000117.1"/>
</dbReference>
<dbReference type="FunCoup" id="O84467">
    <property type="interactions" value="78"/>
</dbReference>
<dbReference type="STRING" id="272561.CT_461"/>
<dbReference type="EnsemblBacteria" id="AAC68061">
    <property type="protein sequence ID" value="AAC68061"/>
    <property type="gene ID" value="CT_461"/>
</dbReference>
<dbReference type="GeneID" id="884234"/>
<dbReference type="KEGG" id="ctr:CT_461"/>
<dbReference type="PATRIC" id="fig|272561.5.peg.499"/>
<dbReference type="HOGENOM" id="CLU_025443_3_2_0"/>
<dbReference type="InParanoid" id="O84467"/>
<dbReference type="OrthoDB" id="9780884at2"/>
<dbReference type="BioCyc" id="MetaCyc:MONOMER-20143"/>
<dbReference type="UniPathway" id="UPA00359"/>
<dbReference type="Proteomes" id="UP000000431">
    <property type="component" value="Chromosome"/>
</dbReference>
<dbReference type="GO" id="GO:0005886">
    <property type="term" value="C:plasma membrane"/>
    <property type="evidence" value="ECO:0007669"/>
    <property type="project" value="UniProtKB-SubCell"/>
</dbReference>
<dbReference type="GO" id="GO:0046872">
    <property type="term" value="F:metal ion binding"/>
    <property type="evidence" value="ECO:0007669"/>
    <property type="project" value="UniProtKB-KW"/>
</dbReference>
<dbReference type="GO" id="GO:0008758">
    <property type="term" value="F:UDP-2,3-diacylglucosamine hydrolase activity"/>
    <property type="evidence" value="ECO:0000314"/>
    <property type="project" value="UniProtKB"/>
</dbReference>
<dbReference type="GO" id="GO:0009245">
    <property type="term" value="P:lipid A biosynthetic process"/>
    <property type="evidence" value="ECO:0000316"/>
    <property type="project" value="UniProtKB"/>
</dbReference>
<dbReference type="CDD" id="cd07385">
    <property type="entry name" value="MPP_YkuE_C"/>
    <property type="match status" value="1"/>
</dbReference>
<dbReference type="Gene3D" id="3.60.21.10">
    <property type="match status" value="1"/>
</dbReference>
<dbReference type="InterPro" id="IPR004843">
    <property type="entry name" value="Calcineurin-like_PHP_ApaH"/>
</dbReference>
<dbReference type="InterPro" id="IPR029052">
    <property type="entry name" value="Metallo-depent_PP-like"/>
</dbReference>
<dbReference type="InterPro" id="IPR051158">
    <property type="entry name" value="Metallophosphoesterase_sf"/>
</dbReference>
<dbReference type="NCBIfam" id="NF033458">
    <property type="entry name" value="lipid_A_LpxG"/>
    <property type="match status" value="1"/>
</dbReference>
<dbReference type="PANTHER" id="PTHR31302:SF31">
    <property type="entry name" value="PHOSPHODIESTERASE YAEI"/>
    <property type="match status" value="1"/>
</dbReference>
<dbReference type="PANTHER" id="PTHR31302">
    <property type="entry name" value="TRANSMEMBRANE PROTEIN WITH METALLOPHOSPHOESTERASE DOMAIN-RELATED"/>
    <property type="match status" value="1"/>
</dbReference>
<dbReference type="Pfam" id="PF00149">
    <property type="entry name" value="Metallophos"/>
    <property type="match status" value="1"/>
</dbReference>
<dbReference type="SUPFAM" id="SSF56300">
    <property type="entry name" value="Metallo-dependent phosphatases"/>
    <property type="match status" value="1"/>
</dbReference>
<accession>O84467</accession>
<organism>
    <name type="scientific">Chlamydia trachomatis serovar D (strain ATCC VR-885 / DSM 19411 / UW-3/Cx)</name>
    <dbReference type="NCBI Taxonomy" id="272561"/>
    <lineage>
        <taxon>Bacteria</taxon>
        <taxon>Pseudomonadati</taxon>
        <taxon>Chlamydiota</taxon>
        <taxon>Chlamydiia</taxon>
        <taxon>Chlamydiales</taxon>
        <taxon>Chlamydiaceae</taxon>
        <taxon>Chlamydia/Chlamydophila group</taxon>
        <taxon>Chlamydia</taxon>
    </lineage>
</organism>